<protein>
    <recommendedName>
        <fullName evidence="1">Methylthioribulose-1-phosphate dehydratase</fullName>
        <shortName evidence="1">MTRu-1-P dehydratase</shortName>
        <ecNumber evidence="1">4.2.1.109</ecNumber>
    </recommendedName>
</protein>
<sequence>MTDNLQLTQLVETCRWIGAKGWAPATGGNMSVRQDDAFCWLSESGKDKGNLTTDDFLQVEIATSHAPSGRKPSAETGLHTLIYHLFPQANAVLHVHTANATVLSRIVKTPELYISGFEMQKSLSGQTTHLDTVCVPVFDNDQDIDALASRIAHYAQERSLNYGFLLRGHGLTCWGRSVEEARRHLEGLEFLFECEMRLRQLERL</sequence>
<keyword id="KW-0028">Amino-acid biosynthesis</keyword>
<keyword id="KW-0456">Lyase</keyword>
<keyword id="KW-0479">Metal-binding</keyword>
<keyword id="KW-0486">Methionine biosynthesis</keyword>
<keyword id="KW-1185">Reference proteome</keyword>
<keyword id="KW-0862">Zinc</keyword>
<evidence type="ECO:0000255" key="1">
    <source>
        <dbReference type="HAMAP-Rule" id="MF_01677"/>
    </source>
</evidence>
<name>MTNB_CITK8</name>
<dbReference type="EC" id="4.2.1.109" evidence="1"/>
<dbReference type="EMBL" id="CP000822">
    <property type="protein sequence ID" value="ABV15043.1"/>
    <property type="molecule type" value="Genomic_DNA"/>
</dbReference>
<dbReference type="RefSeq" id="WP_012134735.1">
    <property type="nucleotide sequence ID" value="NC_009792.1"/>
</dbReference>
<dbReference type="SMR" id="A8ANI0"/>
<dbReference type="STRING" id="290338.CKO_03971"/>
<dbReference type="GeneID" id="45137623"/>
<dbReference type="KEGG" id="cko:CKO_03971"/>
<dbReference type="HOGENOM" id="CLU_006033_4_1_6"/>
<dbReference type="OrthoDB" id="9805559at2"/>
<dbReference type="UniPathway" id="UPA00904">
    <property type="reaction ID" value="UER00875"/>
</dbReference>
<dbReference type="Proteomes" id="UP000008148">
    <property type="component" value="Chromosome"/>
</dbReference>
<dbReference type="GO" id="GO:0005737">
    <property type="term" value="C:cytoplasm"/>
    <property type="evidence" value="ECO:0007669"/>
    <property type="project" value="InterPro"/>
</dbReference>
<dbReference type="GO" id="GO:0046570">
    <property type="term" value="F:methylthioribulose 1-phosphate dehydratase activity"/>
    <property type="evidence" value="ECO:0007669"/>
    <property type="project" value="UniProtKB-UniRule"/>
</dbReference>
<dbReference type="GO" id="GO:0008270">
    <property type="term" value="F:zinc ion binding"/>
    <property type="evidence" value="ECO:0007669"/>
    <property type="project" value="UniProtKB-UniRule"/>
</dbReference>
<dbReference type="GO" id="GO:0019509">
    <property type="term" value="P:L-methionine salvage from methylthioadenosine"/>
    <property type="evidence" value="ECO:0007669"/>
    <property type="project" value="UniProtKB-UniRule"/>
</dbReference>
<dbReference type="GO" id="GO:0005996">
    <property type="term" value="P:monosaccharide metabolic process"/>
    <property type="evidence" value="ECO:0007669"/>
    <property type="project" value="UniProtKB-ARBA"/>
</dbReference>
<dbReference type="Gene3D" id="3.40.225.10">
    <property type="entry name" value="Class II aldolase/adducin N-terminal domain"/>
    <property type="match status" value="1"/>
</dbReference>
<dbReference type="HAMAP" id="MF_01677">
    <property type="entry name" value="Salvage_MtnB"/>
    <property type="match status" value="1"/>
</dbReference>
<dbReference type="InterPro" id="IPR001303">
    <property type="entry name" value="Aldolase_II/adducin_N"/>
</dbReference>
<dbReference type="InterPro" id="IPR036409">
    <property type="entry name" value="Aldolase_II/adducin_N_sf"/>
</dbReference>
<dbReference type="InterPro" id="IPR017714">
    <property type="entry name" value="MethylthioRu-1-P_deHdtase_MtnB"/>
</dbReference>
<dbReference type="NCBIfam" id="NF006672">
    <property type="entry name" value="PRK09220.1"/>
    <property type="match status" value="1"/>
</dbReference>
<dbReference type="NCBIfam" id="TIGR03328">
    <property type="entry name" value="salvage_mtnB"/>
    <property type="match status" value="1"/>
</dbReference>
<dbReference type="PANTHER" id="PTHR10640">
    <property type="entry name" value="METHYLTHIORIBULOSE-1-PHOSPHATE DEHYDRATASE"/>
    <property type="match status" value="1"/>
</dbReference>
<dbReference type="PANTHER" id="PTHR10640:SF7">
    <property type="entry name" value="METHYLTHIORIBULOSE-1-PHOSPHATE DEHYDRATASE"/>
    <property type="match status" value="1"/>
</dbReference>
<dbReference type="Pfam" id="PF00596">
    <property type="entry name" value="Aldolase_II"/>
    <property type="match status" value="1"/>
</dbReference>
<dbReference type="SMART" id="SM01007">
    <property type="entry name" value="Aldolase_II"/>
    <property type="match status" value="1"/>
</dbReference>
<dbReference type="SUPFAM" id="SSF53639">
    <property type="entry name" value="AraD/HMP-PK domain-like"/>
    <property type="match status" value="1"/>
</dbReference>
<accession>A8ANI0</accession>
<reference key="1">
    <citation type="submission" date="2007-08" db="EMBL/GenBank/DDBJ databases">
        <authorList>
            <consortium name="The Citrobacter koseri Genome Sequencing Project"/>
            <person name="McClelland M."/>
            <person name="Sanderson E.K."/>
            <person name="Porwollik S."/>
            <person name="Spieth J."/>
            <person name="Clifton W.S."/>
            <person name="Latreille P."/>
            <person name="Courtney L."/>
            <person name="Wang C."/>
            <person name="Pepin K."/>
            <person name="Bhonagiri V."/>
            <person name="Nash W."/>
            <person name="Johnson M."/>
            <person name="Thiruvilangam P."/>
            <person name="Wilson R."/>
        </authorList>
    </citation>
    <scope>NUCLEOTIDE SEQUENCE [LARGE SCALE GENOMIC DNA]</scope>
    <source>
        <strain>ATCC BAA-895 / CDC 4225-83 / SGSC4696</strain>
    </source>
</reference>
<gene>
    <name evidence="1" type="primary">mtnB</name>
    <name type="ordered locus">CKO_03971</name>
</gene>
<feature type="chain" id="PRO_0000357073" description="Methylthioribulose-1-phosphate dehydratase">
    <location>
        <begin position="1"/>
        <end position="204"/>
    </location>
</feature>
<feature type="binding site" evidence="1">
    <location>
        <position position="94"/>
    </location>
    <ligand>
        <name>Zn(2+)</name>
        <dbReference type="ChEBI" id="CHEBI:29105"/>
    </ligand>
</feature>
<feature type="binding site" evidence="1">
    <location>
        <position position="96"/>
    </location>
    <ligand>
        <name>Zn(2+)</name>
        <dbReference type="ChEBI" id="CHEBI:29105"/>
    </ligand>
</feature>
<proteinExistence type="inferred from homology"/>
<comment type="function">
    <text evidence="1">Catalyzes the dehydration of methylthioribulose-1-phosphate (MTRu-1-P) into 2,3-diketo-5-methylthiopentyl-1-phosphate (DK-MTP-1-P).</text>
</comment>
<comment type="catalytic activity">
    <reaction evidence="1">
        <text>5-(methylsulfanyl)-D-ribulose 1-phosphate = 5-methylsulfanyl-2,3-dioxopentyl phosphate + H2O</text>
        <dbReference type="Rhea" id="RHEA:15549"/>
        <dbReference type="ChEBI" id="CHEBI:15377"/>
        <dbReference type="ChEBI" id="CHEBI:58548"/>
        <dbReference type="ChEBI" id="CHEBI:58828"/>
        <dbReference type="EC" id="4.2.1.109"/>
    </reaction>
</comment>
<comment type="cofactor">
    <cofactor evidence="1">
        <name>Zn(2+)</name>
        <dbReference type="ChEBI" id="CHEBI:29105"/>
    </cofactor>
    <text evidence="1">Binds 1 zinc ion per subunit.</text>
</comment>
<comment type="pathway">
    <text evidence="1">Amino-acid biosynthesis; L-methionine biosynthesis via salvage pathway; L-methionine from S-methyl-5-thio-alpha-D-ribose 1-phosphate: step 2/6.</text>
</comment>
<comment type="similarity">
    <text evidence="1">Belongs to the aldolase class II family. MtnB subfamily.</text>
</comment>
<organism>
    <name type="scientific">Citrobacter koseri (strain ATCC BAA-895 / CDC 4225-83 / SGSC4696)</name>
    <dbReference type="NCBI Taxonomy" id="290338"/>
    <lineage>
        <taxon>Bacteria</taxon>
        <taxon>Pseudomonadati</taxon>
        <taxon>Pseudomonadota</taxon>
        <taxon>Gammaproteobacteria</taxon>
        <taxon>Enterobacterales</taxon>
        <taxon>Enterobacteriaceae</taxon>
        <taxon>Citrobacter</taxon>
    </lineage>
</organism>